<proteinExistence type="inferred from homology"/>
<comment type="function">
    <text evidence="1">Catalyzes the interconversion of 2-phosphoglycerate and 3-phosphoglycerate.</text>
</comment>
<comment type="catalytic activity">
    <reaction evidence="1">
        <text>(2R)-2-phosphoglycerate = (2R)-3-phosphoglycerate</text>
        <dbReference type="Rhea" id="RHEA:15901"/>
        <dbReference type="ChEBI" id="CHEBI:58272"/>
        <dbReference type="ChEBI" id="CHEBI:58289"/>
        <dbReference type="EC" id="5.4.2.11"/>
    </reaction>
</comment>
<comment type="pathway">
    <text evidence="1">Carbohydrate degradation; glycolysis; pyruvate from D-glyceraldehyde 3-phosphate: step 3/5.</text>
</comment>
<comment type="similarity">
    <text evidence="1">Belongs to the phosphoglycerate mutase family. BPG-dependent PGAM subfamily.</text>
</comment>
<feature type="chain" id="PRO_0000179945" description="2,3-bisphosphoglycerate-dependent phosphoglycerate mutase">
    <location>
        <begin position="1"/>
        <end position="241"/>
    </location>
</feature>
<feature type="active site" description="Tele-phosphohistidine intermediate" evidence="1">
    <location>
        <position position="12"/>
    </location>
</feature>
<feature type="active site" description="Proton donor/acceptor" evidence="1">
    <location>
        <position position="117"/>
    </location>
</feature>
<feature type="binding site" evidence="1">
    <location>
        <begin position="24"/>
        <end position="25"/>
    </location>
    <ligand>
        <name>substrate</name>
    </ligand>
</feature>
<feature type="binding site" evidence="1">
    <location>
        <position position="61"/>
    </location>
    <ligand>
        <name>substrate</name>
    </ligand>
</feature>
<feature type="binding site" evidence="1">
    <location>
        <begin position="117"/>
        <end position="120"/>
    </location>
    <ligand>
        <name>substrate</name>
    </ligand>
</feature>
<feature type="binding site" evidence="1">
    <location>
        <position position="128"/>
    </location>
    <ligand>
        <name>substrate</name>
    </ligand>
</feature>
<feature type="site" description="Transition state stabilizer" evidence="1">
    <location>
        <position position="187"/>
    </location>
</feature>
<keyword id="KW-0312">Gluconeogenesis</keyword>
<keyword id="KW-0324">Glycolysis</keyword>
<keyword id="KW-0413">Isomerase</keyword>
<name>GPMA_METMA</name>
<reference key="1">
    <citation type="journal article" date="2002" name="J. Mol. Microbiol. Biotechnol.">
        <title>The genome of Methanosarcina mazei: evidence for lateral gene transfer between Bacteria and Archaea.</title>
        <authorList>
            <person name="Deppenmeier U."/>
            <person name="Johann A."/>
            <person name="Hartsch T."/>
            <person name="Merkl R."/>
            <person name="Schmitz R.A."/>
            <person name="Martinez-Arias R."/>
            <person name="Henne A."/>
            <person name="Wiezer A."/>
            <person name="Baeumer S."/>
            <person name="Jacobi C."/>
            <person name="Brueggemann H."/>
            <person name="Lienard T."/>
            <person name="Christmann A."/>
            <person name="Boemecke M."/>
            <person name="Steckel S."/>
            <person name="Bhattacharyya A."/>
            <person name="Lykidis A."/>
            <person name="Overbeek R."/>
            <person name="Klenk H.-P."/>
            <person name="Gunsalus R.P."/>
            <person name="Fritz H.-J."/>
            <person name="Gottschalk G."/>
        </authorList>
    </citation>
    <scope>NUCLEOTIDE SEQUENCE [LARGE SCALE GENOMIC DNA]</scope>
    <source>
        <strain>ATCC BAA-159 / DSM 3647 / Goe1 / Go1 / JCM 11833 / OCM 88</strain>
    </source>
</reference>
<organism>
    <name type="scientific">Methanosarcina mazei (strain ATCC BAA-159 / DSM 3647 / Goe1 / Go1 / JCM 11833 / OCM 88)</name>
    <name type="common">Methanosarcina frisia</name>
    <dbReference type="NCBI Taxonomy" id="192952"/>
    <lineage>
        <taxon>Archaea</taxon>
        <taxon>Methanobacteriati</taxon>
        <taxon>Methanobacteriota</taxon>
        <taxon>Stenosarchaea group</taxon>
        <taxon>Methanomicrobia</taxon>
        <taxon>Methanosarcinales</taxon>
        <taxon>Methanosarcinaceae</taxon>
        <taxon>Methanosarcina</taxon>
    </lineage>
</organism>
<gene>
    <name evidence="1" type="primary">gpmA</name>
    <name type="ordered locus">MM_2993</name>
</gene>
<sequence length="241" mass="27488">MIITGHLILVRHGEPGLKPGERLSGWIDIPLSRKGIEEALECAKALENIEIDIAFASDLVRTQETLFIILSGQKKTGVVVHEKTEDKVPPEKLDWYSYPEKLGEDLIPVYTTPALNERYYGKLQGRKKQKMEEKYGAEQVANWRWNFEPGPPEGESLKAVYERTVPYFRKKVMPALEGGKNVLICAHQSSLRALVKYIEDISDKDIREVRLSTGELAIYHFSEGKLVRENEELGPELKRNI</sequence>
<dbReference type="EC" id="5.4.2.11" evidence="1"/>
<dbReference type="EMBL" id="AE008384">
    <property type="protein sequence ID" value="AAM32689.1"/>
    <property type="molecule type" value="Genomic_DNA"/>
</dbReference>
<dbReference type="RefSeq" id="WP_011034894.1">
    <property type="nucleotide sequence ID" value="NC_003901.1"/>
</dbReference>
<dbReference type="SMR" id="Q8PST3"/>
<dbReference type="KEGG" id="mma:MM_2993"/>
<dbReference type="PATRIC" id="fig|192952.21.peg.3474"/>
<dbReference type="eggNOG" id="arCOG01993">
    <property type="taxonomic scope" value="Archaea"/>
</dbReference>
<dbReference type="HOGENOM" id="CLU_033323_1_4_2"/>
<dbReference type="UniPathway" id="UPA00109">
    <property type="reaction ID" value="UER00186"/>
</dbReference>
<dbReference type="Proteomes" id="UP000000595">
    <property type="component" value="Chromosome"/>
</dbReference>
<dbReference type="GO" id="GO:0004619">
    <property type="term" value="F:phosphoglycerate mutase activity"/>
    <property type="evidence" value="ECO:0007669"/>
    <property type="project" value="UniProtKB-EC"/>
</dbReference>
<dbReference type="GO" id="GO:0006094">
    <property type="term" value="P:gluconeogenesis"/>
    <property type="evidence" value="ECO:0007669"/>
    <property type="project" value="UniProtKB-UniRule"/>
</dbReference>
<dbReference type="GO" id="GO:0006096">
    <property type="term" value="P:glycolytic process"/>
    <property type="evidence" value="ECO:0007669"/>
    <property type="project" value="UniProtKB-UniRule"/>
</dbReference>
<dbReference type="CDD" id="cd07067">
    <property type="entry name" value="HP_PGM_like"/>
    <property type="match status" value="1"/>
</dbReference>
<dbReference type="Gene3D" id="3.40.50.1240">
    <property type="entry name" value="Phosphoglycerate mutase-like"/>
    <property type="match status" value="1"/>
</dbReference>
<dbReference type="HAMAP" id="MF_01039">
    <property type="entry name" value="PGAM_GpmA"/>
    <property type="match status" value="1"/>
</dbReference>
<dbReference type="InterPro" id="IPR013078">
    <property type="entry name" value="His_Pase_superF_clade-1"/>
</dbReference>
<dbReference type="InterPro" id="IPR029033">
    <property type="entry name" value="His_PPase_superfam"/>
</dbReference>
<dbReference type="InterPro" id="IPR005952">
    <property type="entry name" value="Phosphogly_mut1"/>
</dbReference>
<dbReference type="PANTHER" id="PTHR11931">
    <property type="entry name" value="PHOSPHOGLYCERATE MUTASE"/>
    <property type="match status" value="1"/>
</dbReference>
<dbReference type="Pfam" id="PF00300">
    <property type="entry name" value="His_Phos_1"/>
    <property type="match status" value="2"/>
</dbReference>
<dbReference type="PIRSF" id="PIRSF000709">
    <property type="entry name" value="6PFK_2-Ptase"/>
    <property type="match status" value="1"/>
</dbReference>
<dbReference type="SMART" id="SM00855">
    <property type="entry name" value="PGAM"/>
    <property type="match status" value="1"/>
</dbReference>
<dbReference type="SUPFAM" id="SSF53254">
    <property type="entry name" value="Phosphoglycerate mutase-like"/>
    <property type="match status" value="1"/>
</dbReference>
<evidence type="ECO:0000255" key="1">
    <source>
        <dbReference type="HAMAP-Rule" id="MF_01039"/>
    </source>
</evidence>
<accession>Q8PST3</accession>
<protein>
    <recommendedName>
        <fullName evidence="1">2,3-bisphosphoglycerate-dependent phosphoglycerate mutase</fullName>
        <shortName evidence="1">BPG-dependent PGAM</shortName>
        <shortName evidence="1">PGAM</shortName>
        <shortName evidence="1">Phosphoglyceromutase</shortName>
        <shortName evidence="1">dPGM</shortName>
        <ecNumber evidence="1">5.4.2.11</ecNumber>
    </recommendedName>
</protein>